<name>PSRP_ECOL6</name>
<dbReference type="EC" id="2.7.11.33" evidence="1"/>
<dbReference type="EC" id="2.7.4.28" evidence="1"/>
<dbReference type="EMBL" id="AE014075">
    <property type="protein sequence ID" value="AAN80559.1"/>
    <property type="molecule type" value="Genomic_DNA"/>
</dbReference>
<dbReference type="RefSeq" id="WP_000368046.1">
    <property type="nucleotide sequence ID" value="NZ_CP051263.1"/>
</dbReference>
<dbReference type="SMR" id="P0A8A5"/>
<dbReference type="STRING" id="199310.c2099"/>
<dbReference type="GeneID" id="93775866"/>
<dbReference type="KEGG" id="ecc:c2099"/>
<dbReference type="eggNOG" id="COG1806">
    <property type="taxonomic scope" value="Bacteria"/>
</dbReference>
<dbReference type="HOGENOM" id="CLU_046206_1_0_6"/>
<dbReference type="BioCyc" id="ECOL199310:C2099-MONOMER"/>
<dbReference type="Proteomes" id="UP000001410">
    <property type="component" value="Chromosome"/>
</dbReference>
<dbReference type="GO" id="GO:0043531">
    <property type="term" value="F:ADP binding"/>
    <property type="evidence" value="ECO:0007669"/>
    <property type="project" value="UniProtKB-UniRule"/>
</dbReference>
<dbReference type="GO" id="GO:0005524">
    <property type="term" value="F:ATP binding"/>
    <property type="evidence" value="ECO:0007669"/>
    <property type="project" value="InterPro"/>
</dbReference>
<dbReference type="GO" id="GO:0016776">
    <property type="term" value="F:phosphotransferase activity, phosphate group as acceptor"/>
    <property type="evidence" value="ECO:0007669"/>
    <property type="project" value="UniProtKB-UniRule"/>
</dbReference>
<dbReference type="GO" id="GO:0004674">
    <property type="term" value="F:protein serine/threonine kinase activity"/>
    <property type="evidence" value="ECO:0007669"/>
    <property type="project" value="UniProtKB-UniRule"/>
</dbReference>
<dbReference type="HAMAP" id="MF_01062">
    <property type="entry name" value="PSRP"/>
    <property type="match status" value="1"/>
</dbReference>
<dbReference type="InterPro" id="IPR005177">
    <property type="entry name" value="Kinase-pyrophosphorylase"/>
</dbReference>
<dbReference type="InterPro" id="IPR026530">
    <property type="entry name" value="PSRP"/>
</dbReference>
<dbReference type="NCBIfam" id="NF003742">
    <property type="entry name" value="PRK05339.1"/>
    <property type="match status" value="1"/>
</dbReference>
<dbReference type="PANTHER" id="PTHR31756">
    <property type="entry name" value="PYRUVATE, PHOSPHATE DIKINASE REGULATORY PROTEIN 1, CHLOROPLASTIC"/>
    <property type="match status" value="1"/>
</dbReference>
<dbReference type="PANTHER" id="PTHR31756:SF3">
    <property type="entry name" value="PYRUVATE, PHOSPHATE DIKINASE REGULATORY PROTEIN 1, CHLOROPLASTIC"/>
    <property type="match status" value="1"/>
</dbReference>
<dbReference type="Pfam" id="PF03618">
    <property type="entry name" value="Kinase-PPPase"/>
    <property type="match status" value="1"/>
</dbReference>
<evidence type="ECO:0000255" key="1">
    <source>
        <dbReference type="HAMAP-Rule" id="MF_01062"/>
    </source>
</evidence>
<gene>
    <name evidence="1" type="primary">ppsR</name>
    <name type="ordered locus">c2099</name>
</gene>
<organism>
    <name type="scientific">Escherichia coli O6:H1 (strain CFT073 / ATCC 700928 / UPEC)</name>
    <dbReference type="NCBI Taxonomy" id="199310"/>
    <lineage>
        <taxon>Bacteria</taxon>
        <taxon>Pseudomonadati</taxon>
        <taxon>Pseudomonadota</taxon>
        <taxon>Gammaproteobacteria</taxon>
        <taxon>Enterobacterales</taxon>
        <taxon>Enterobacteriaceae</taxon>
        <taxon>Escherichia</taxon>
    </lineage>
</organism>
<reference key="1">
    <citation type="journal article" date="2002" name="Proc. Natl. Acad. Sci. U.S.A.">
        <title>Extensive mosaic structure revealed by the complete genome sequence of uropathogenic Escherichia coli.</title>
        <authorList>
            <person name="Welch R.A."/>
            <person name="Burland V."/>
            <person name="Plunkett G. III"/>
            <person name="Redford P."/>
            <person name="Roesch P."/>
            <person name="Rasko D."/>
            <person name="Buckles E.L."/>
            <person name="Liou S.-R."/>
            <person name="Boutin A."/>
            <person name="Hackett J."/>
            <person name="Stroud D."/>
            <person name="Mayhew G.F."/>
            <person name="Rose D.J."/>
            <person name="Zhou S."/>
            <person name="Schwartz D.C."/>
            <person name="Perna N.T."/>
            <person name="Mobley H.L.T."/>
            <person name="Donnenberg M.S."/>
            <person name="Blattner F.R."/>
        </authorList>
    </citation>
    <scope>NUCLEOTIDE SEQUENCE [LARGE SCALE GENOMIC DNA]</scope>
    <source>
        <strain>CFT073 / ATCC 700928 / UPEC</strain>
    </source>
</reference>
<sequence>MDNAVDRHVFYISDGTAITAEVLGHAVMSQFPVTISSITLPFVENESRARAVKDQIDAIYHQTGVRPLVFYSIVLPEIRAIILQSEGFCQDIVQALVAPLQQEMKLDPTPIAHRTHGLNPNNLNKYDARIAAIDYTLAHDDGISLRNLDQAQVILLGVSRCGKTPTSLYLAMQFGIRAANYPFIADDMDNLVLPASLKPLQHKLFGLTIDPERLAAIREERRENSRYASLRQCRMEVAEVEALYRKNQIPWINSTNYSVEEIATKILDIMGLSRRMY</sequence>
<comment type="function">
    <text evidence="1">Bifunctional serine/threonine kinase and phosphorylase involved in the regulation of the phosphoenolpyruvate synthase (PEPS) by catalyzing its phosphorylation/dephosphorylation.</text>
</comment>
<comment type="catalytic activity">
    <reaction evidence="1">
        <text>[pyruvate, water dikinase] + ADP = [pyruvate, water dikinase]-phosphate + AMP + H(+)</text>
        <dbReference type="Rhea" id="RHEA:46020"/>
        <dbReference type="Rhea" id="RHEA-COMP:11425"/>
        <dbReference type="Rhea" id="RHEA-COMP:11426"/>
        <dbReference type="ChEBI" id="CHEBI:15378"/>
        <dbReference type="ChEBI" id="CHEBI:43176"/>
        <dbReference type="ChEBI" id="CHEBI:68546"/>
        <dbReference type="ChEBI" id="CHEBI:456215"/>
        <dbReference type="ChEBI" id="CHEBI:456216"/>
        <dbReference type="EC" id="2.7.11.33"/>
    </reaction>
</comment>
<comment type="catalytic activity">
    <reaction evidence="1">
        <text>[pyruvate, water dikinase]-phosphate + phosphate + H(+) = [pyruvate, water dikinase] + diphosphate</text>
        <dbReference type="Rhea" id="RHEA:48580"/>
        <dbReference type="Rhea" id="RHEA-COMP:11425"/>
        <dbReference type="Rhea" id="RHEA-COMP:11426"/>
        <dbReference type="ChEBI" id="CHEBI:15378"/>
        <dbReference type="ChEBI" id="CHEBI:33019"/>
        <dbReference type="ChEBI" id="CHEBI:43176"/>
        <dbReference type="ChEBI" id="CHEBI:43474"/>
        <dbReference type="ChEBI" id="CHEBI:68546"/>
        <dbReference type="EC" id="2.7.4.28"/>
    </reaction>
</comment>
<comment type="similarity">
    <text evidence="1">Belongs to the pyruvate, phosphate/water dikinase regulatory protein family. PSRP subfamily.</text>
</comment>
<keyword id="KW-0418">Kinase</keyword>
<keyword id="KW-0547">Nucleotide-binding</keyword>
<keyword id="KW-1185">Reference proteome</keyword>
<keyword id="KW-0723">Serine/threonine-protein kinase</keyword>
<keyword id="KW-0808">Transferase</keyword>
<feature type="chain" id="PRO_0000196661" description="Phosphoenolpyruvate synthase regulatory protein">
    <location>
        <begin position="1"/>
        <end position="277"/>
    </location>
</feature>
<feature type="binding site" evidence="1">
    <location>
        <begin position="157"/>
        <end position="164"/>
    </location>
    <ligand>
        <name>ADP</name>
        <dbReference type="ChEBI" id="CHEBI:456216"/>
    </ligand>
</feature>
<proteinExistence type="inferred from homology"/>
<protein>
    <recommendedName>
        <fullName evidence="1">Phosphoenolpyruvate synthase regulatory protein</fullName>
        <shortName evidence="1">PEP synthase regulatory protein</shortName>
        <shortName evidence="1">PSRP</shortName>
        <ecNumber evidence="1">2.7.11.33</ecNumber>
        <ecNumber evidence="1">2.7.4.28</ecNumber>
    </recommendedName>
    <alternativeName>
        <fullName evidence="1">Pyruvate, water dikinase regulatory protein</fullName>
    </alternativeName>
</protein>
<accession>P0A8A5</accession>
<accession>P03822</accession>
<accession>P46137</accession>
<accession>P76203</accession>